<evidence type="ECO:0000255" key="1">
    <source>
        <dbReference type="PROSITE-ProRule" id="PRU00153"/>
    </source>
</evidence>
<evidence type="ECO:0000269" key="2">
    <source>
    </source>
</evidence>
<evidence type="ECO:0000269" key="3">
    <source>
    </source>
</evidence>
<evidence type="ECO:0000269" key="4">
    <source>
    </source>
</evidence>
<evidence type="ECO:0000303" key="5">
    <source>
    </source>
</evidence>
<evidence type="ECO:0000305" key="6"/>
<evidence type="ECO:0007744" key="7">
    <source>
        <dbReference type="PDB" id="8YR5"/>
    </source>
</evidence>
<evidence type="ECO:0007744" key="8">
    <source>
        <dbReference type="PDB" id="8YR6"/>
    </source>
</evidence>
<evidence type="ECO:0007829" key="9">
    <source>
        <dbReference type="PDB" id="8YR5"/>
    </source>
</evidence>
<dbReference type="EC" id="2.7.8.8" evidence="3 4"/>
<dbReference type="EMBL" id="M58699">
    <property type="protein sequence ID" value="AAA97504.1"/>
    <property type="molecule type" value="Genomic_DNA"/>
</dbReference>
<dbReference type="EMBL" id="U00096">
    <property type="protein sequence ID" value="AAC75638.2"/>
    <property type="molecule type" value="Genomic_DNA"/>
</dbReference>
<dbReference type="EMBL" id="AP009048">
    <property type="protein sequence ID" value="BAA16470.2"/>
    <property type="molecule type" value="Genomic_DNA"/>
</dbReference>
<dbReference type="RefSeq" id="NP_417080.4">
    <property type="nucleotide sequence ID" value="NC_000913.3"/>
</dbReference>
<dbReference type="RefSeq" id="WP_000949265.1">
    <property type="nucleotide sequence ID" value="NZ_STEB01000011.1"/>
</dbReference>
<dbReference type="PDB" id="8YR5">
    <property type="method" value="X-ray"/>
    <property type="resolution" value="2.83 A"/>
    <property type="chains" value="A/B/C/D/E/F/G/H/I/J/K/L=2-451"/>
</dbReference>
<dbReference type="PDB" id="8YR6">
    <property type="method" value="X-ray"/>
    <property type="resolution" value="2.44 A"/>
    <property type="chains" value="A=2-451"/>
</dbReference>
<dbReference type="PDBsum" id="8YR5"/>
<dbReference type="PDBsum" id="8YR6"/>
<dbReference type="SMR" id="P23830"/>
<dbReference type="BioGRID" id="4259429">
    <property type="interactions" value="220"/>
</dbReference>
<dbReference type="DIP" id="DIP-10593N"/>
<dbReference type="FunCoup" id="P23830">
    <property type="interactions" value="642"/>
</dbReference>
<dbReference type="IntAct" id="P23830">
    <property type="interactions" value="35"/>
</dbReference>
<dbReference type="STRING" id="511145.b2585"/>
<dbReference type="jPOST" id="P23830"/>
<dbReference type="PaxDb" id="511145-b2585"/>
<dbReference type="EnsemblBacteria" id="AAC75638">
    <property type="protein sequence ID" value="AAC75638"/>
    <property type="gene ID" value="b2585"/>
</dbReference>
<dbReference type="GeneID" id="75206279"/>
<dbReference type="GeneID" id="947059"/>
<dbReference type="KEGG" id="ecj:JW2569"/>
<dbReference type="KEGG" id="eco:b2585"/>
<dbReference type="KEGG" id="ecoc:C3026_14325"/>
<dbReference type="PATRIC" id="fig|1411691.4.peg.4149"/>
<dbReference type="EchoBASE" id="EB0774"/>
<dbReference type="eggNOG" id="COG1502">
    <property type="taxonomic scope" value="Bacteria"/>
</dbReference>
<dbReference type="HOGENOM" id="CLU_051350_1_0_6"/>
<dbReference type="InParanoid" id="P23830"/>
<dbReference type="OMA" id="HKCLAQC"/>
<dbReference type="OrthoDB" id="8543662at2"/>
<dbReference type="PhylomeDB" id="P23830"/>
<dbReference type="BioCyc" id="EcoCyc:PHOSPHASERSYN-MONOMER"/>
<dbReference type="BioCyc" id="MetaCyc:PHOSPHASERSYN-MONOMER"/>
<dbReference type="BRENDA" id="2.7.8.8">
    <property type="organism ID" value="2026"/>
</dbReference>
<dbReference type="UniPathway" id="UPA00558">
    <property type="reaction ID" value="UER00615"/>
</dbReference>
<dbReference type="PRO" id="PR:P23830"/>
<dbReference type="Proteomes" id="UP000000625">
    <property type="component" value="Chromosome"/>
</dbReference>
<dbReference type="GO" id="GO:0005737">
    <property type="term" value="C:cytoplasm"/>
    <property type="evidence" value="ECO:0000314"/>
    <property type="project" value="EcoCyc"/>
</dbReference>
<dbReference type="GO" id="GO:0005829">
    <property type="term" value="C:cytosol"/>
    <property type="evidence" value="ECO:0000314"/>
    <property type="project" value="EcoCyc"/>
</dbReference>
<dbReference type="GO" id="GO:0005886">
    <property type="term" value="C:plasma membrane"/>
    <property type="evidence" value="ECO:0007669"/>
    <property type="project" value="UniProtKB-SubCell"/>
</dbReference>
<dbReference type="GO" id="GO:0008444">
    <property type="term" value="F:CDP-diacylglycerol-glycerol-3-phosphate 3-phosphatidyltransferase activity"/>
    <property type="evidence" value="ECO:0007669"/>
    <property type="project" value="InterPro"/>
</dbReference>
<dbReference type="GO" id="GO:0003882">
    <property type="term" value="F:CDP-diacylglycerol-serine O-phosphatidyltransferase activity"/>
    <property type="evidence" value="ECO:0000314"/>
    <property type="project" value="EcoCyc"/>
</dbReference>
<dbReference type="GO" id="GO:0005543">
    <property type="term" value="F:phospholipid binding"/>
    <property type="evidence" value="ECO:0000314"/>
    <property type="project" value="EcoCyc"/>
</dbReference>
<dbReference type="GO" id="GO:0032049">
    <property type="term" value="P:cardiolipin biosynthetic process"/>
    <property type="evidence" value="ECO:0007669"/>
    <property type="project" value="InterPro"/>
</dbReference>
<dbReference type="GO" id="GO:0008654">
    <property type="term" value="P:phospholipid biosynthetic process"/>
    <property type="evidence" value="ECO:0000315"/>
    <property type="project" value="EcoCyc"/>
</dbReference>
<dbReference type="CDD" id="cd09134">
    <property type="entry name" value="PLDc_PSS_G_neg_1"/>
    <property type="match status" value="1"/>
</dbReference>
<dbReference type="CDD" id="cd09136">
    <property type="entry name" value="PLDc_PSS_G_neg_2"/>
    <property type="match status" value="1"/>
</dbReference>
<dbReference type="FunFam" id="3.30.870.10:FF:000006">
    <property type="entry name" value="CDP-diacylglycerol--serine O-phosphatidyltransferase"/>
    <property type="match status" value="1"/>
</dbReference>
<dbReference type="FunFam" id="3.30.870.10:FF:000008">
    <property type="entry name" value="CDP-diacylglycerol--serine O-phosphatidyltransferase"/>
    <property type="match status" value="1"/>
</dbReference>
<dbReference type="Gene3D" id="3.30.870.10">
    <property type="entry name" value="Endonuclease Chain A"/>
    <property type="match status" value="2"/>
</dbReference>
<dbReference type="InterPro" id="IPR016270">
    <property type="entry name" value="PGS1"/>
</dbReference>
<dbReference type="InterPro" id="IPR025202">
    <property type="entry name" value="PLD-like_dom"/>
</dbReference>
<dbReference type="InterPro" id="IPR001736">
    <property type="entry name" value="PLipase_D/transphosphatidylase"/>
</dbReference>
<dbReference type="NCBIfam" id="NF006946">
    <property type="entry name" value="PRK09428.1"/>
    <property type="match status" value="1"/>
</dbReference>
<dbReference type="PANTHER" id="PTHR12586:SF1">
    <property type="entry name" value="CDP-DIACYLGLYCEROL--GLYCEROL-3-PHOSPHATE 3-PHOSPHATIDYLTRANSFERASE, MITOCHONDRIAL"/>
    <property type="match status" value="1"/>
</dbReference>
<dbReference type="PANTHER" id="PTHR12586">
    <property type="entry name" value="CDP-DIACYLGLYCEROL--SERINE O-PHOSPHATIDYLTRANSFERASE"/>
    <property type="match status" value="1"/>
</dbReference>
<dbReference type="Pfam" id="PF00614">
    <property type="entry name" value="PLDc"/>
    <property type="match status" value="1"/>
</dbReference>
<dbReference type="Pfam" id="PF13091">
    <property type="entry name" value="PLDc_2"/>
    <property type="match status" value="1"/>
</dbReference>
<dbReference type="PIRSF" id="PIRSF000850">
    <property type="entry name" value="Phospholipase_D_PSS"/>
    <property type="match status" value="1"/>
</dbReference>
<dbReference type="SMART" id="SM00155">
    <property type="entry name" value="PLDc"/>
    <property type="match status" value="2"/>
</dbReference>
<dbReference type="SUPFAM" id="SSF56024">
    <property type="entry name" value="Phospholipase D/nuclease"/>
    <property type="match status" value="2"/>
</dbReference>
<dbReference type="PROSITE" id="PS50035">
    <property type="entry name" value="PLD"/>
    <property type="match status" value="2"/>
</dbReference>
<accession>P23830</accession>
<accession>P78100</accession>
<accession>P78256</accession>
<sequence length="451" mass="52802">MLSKFKRNKHQQHLAQLPKISQSVDDVDFFYAPADFRETLLEKIASAKQRICIVALYLEQDDGGKGILNALYEAKRQRPELDVRVLVDWHRAQRGRIGAAASNTNADWYCRMAQENPGVDVPVYGVPINTREALGVLHFKGFIIDDSVLYSGASLNDVYLHQHDKYRYDRYHLIRNRKMSDIMFEWVTQNIMNGRGVNRLDDVNRPKSPEIKNDIRLFRQELRDAAYHFQGDADNDQLSVTPLVGLGKSSLLNKTIFHLMPCAEQKLTICTPYFNLPAILVRNIIQLLREGKKVEIIVGDKTANDFYIPEDEPFKIIGALPYLYEINLRRFLSRLQYYVNTDQLVVRLWKDDDNTYHLKGMWVDDKWMLITGNNLNPRAWRLDLENAILIHDPQLELAPQREKELELIREHTTIVKHYRDLQSIADYPVKVRKLIRRLRRIRIDRLISRIL</sequence>
<protein>
    <recommendedName>
        <fullName evidence="5">CDP-diacylglycerol--serine O-phosphatidyltransferase PssA</fullName>
        <ecNumber evidence="3 4">2.7.8.8</ecNumber>
    </recommendedName>
    <alternativeName>
        <fullName>Phosphatidylserine synthase</fullName>
    </alternativeName>
</protein>
<name>PSS_ECOLI</name>
<proteinExistence type="evidence at protein level"/>
<keyword id="KW-0002">3D-structure</keyword>
<keyword id="KW-0997">Cell inner membrane</keyword>
<keyword id="KW-1003">Cell membrane</keyword>
<keyword id="KW-0963">Cytoplasm</keyword>
<keyword id="KW-0903">Direct protein sequencing</keyword>
<keyword id="KW-0444">Lipid biosynthesis</keyword>
<keyword id="KW-0443">Lipid metabolism</keyword>
<keyword id="KW-0472">Membrane</keyword>
<keyword id="KW-0594">Phospholipid biosynthesis</keyword>
<keyword id="KW-1208">Phospholipid metabolism</keyword>
<keyword id="KW-1185">Reference proteome</keyword>
<keyword id="KW-0677">Repeat</keyword>
<keyword id="KW-0808">Transferase</keyword>
<organism>
    <name type="scientific">Escherichia coli (strain K12)</name>
    <dbReference type="NCBI Taxonomy" id="83333"/>
    <lineage>
        <taxon>Bacteria</taxon>
        <taxon>Pseudomonadati</taxon>
        <taxon>Pseudomonadota</taxon>
        <taxon>Gammaproteobacteria</taxon>
        <taxon>Enterobacterales</taxon>
        <taxon>Enterobacteriaceae</taxon>
        <taxon>Escherichia</taxon>
    </lineage>
</organism>
<gene>
    <name type="primary">pssA</name>
    <name type="synonym">pss</name>
    <name type="ordered locus">b2585</name>
    <name type="ordered locus">JW2569</name>
</gene>
<reference key="1">
    <citation type="journal article" date="1991" name="J. Biol. Chem.">
        <title>Sequence and inactivation of the pss gene of Escherichia coli. Phosphatidylethanolamine may not be essential for cell viability.</title>
        <authorList>
            <person name="Dechavigny A."/>
            <person name="Heacock P.N."/>
            <person name="Dowhan W."/>
        </authorList>
    </citation>
    <scope>NUCLEOTIDE SEQUENCE [GENOMIC DNA]</scope>
    <scope>PROTEIN SEQUENCE OF 1-12</scope>
</reference>
<reference key="2">
    <citation type="journal article" date="1997" name="DNA Res.">
        <title>Construction of a contiguous 874-kb sequence of the Escherichia coli-K12 genome corresponding to 50.0-68.8 min on the linkage map and analysis of its sequence features.</title>
        <authorList>
            <person name="Yamamoto Y."/>
            <person name="Aiba H."/>
            <person name="Baba T."/>
            <person name="Hayashi K."/>
            <person name="Inada T."/>
            <person name="Isono K."/>
            <person name="Itoh T."/>
            <person name="Kimura S."/>
            <person name="Kitagawa M."/>
            <person name="Makino K."/>
            <person name="Miki T."/>
            <person name="Mitsuhashi N."/>
            <person name="Mizobuchi K."/>
            <person name="Mori H."/>
            <person name="Nakade S."/>
            <person name="Nakamura Y."/>
            <person name="Nashimoto H."/>
            <person name="Oshima T."/>
            <person name="Oyama S."/>
            <person name="Saito N."/>
            <person name="Sampei G."/>
            <person name="Satoh Y."/>
            <person name="Sivasundaram S."/>
            <person name="Tagami H."/>
            <person name="Takahashi H."/>
            <person name="Takeda J."/>
            <person name="Takemoto K."/>
            <person name="Uehara K."/>
            <person name="Wada C."/>
            <person name="Yamagata S."/>
            <person name="Horiuchi T."/>
        </authorList>
    </citation>
    <scope>NUCLEOTIDE SEQUENCE [LARGE SCALE GENOMIC DNA]</scope>
    <source>
        <strain>K12 / W3110 / ATCC 27325 / DSM 5911</strain>
    </source>
</reference>
<reference key="3">
    <citation type="journal article" date="1997" name="Science">
        <title>The complete genome sequence of Escherichia coli K-12.</title>
        <authorList>
            <person name="Blattner F.R."/>
            <person name="Plunkett G. III"/>
            <person name="Bloch C.A."/>
            <person name="Perna N.T."/>
            <person name="Burland V."/>
            <person name="Riley M."/>
            <person name="Collado-Vides J."/>
            <person name="Glasner J.D."/>
            <person name="Rode C.K."/>
            <person name="Mayhew G.F."/>
            <person name="Gregor J."/>
            <person name="Davis N.W."/>
            <person name="Kirkpatrick H.A."/>
            <person name="Goeden M.A."/>
            <person name="Rose D.J."/>
            <person name="Mau B."/>
            <person name="Shao Y."/>
        </authorList>
    </citation>
    <scope>NUCLEOTIDE SEQUENCE [LARGE SCALE GENOMIC DNA]</scope>
    <source>
        <strain>K12 / MG1655 / ATCC 47076</strain>
    </source>
</reference>
<reference key="4">
    <citation type="journal article" date="2006" name="Mol. Syst. Biol.">
        <title>Highly accurate genome sequences of Escherichia coli K-12 strains MG1655 and W3110.</title>
        <authorList>
            <person name="Hayashi K."/>
            <person name="Morooka N."/>
            <person name="Yamamoto Y."/>
            <person name="Fujita K."/>
            <person name="Isono K."/>
            <person name="Choi S."/>
            <person name="Ohtsubo E."/>
            <person name="Baba T."/>
            <person name="Wanner B.L."/>
            <person name="Mori H."/>
            <person name="Horiuchi T."/>
        </authorList>
    </citation>
    <scope>NUCLEOTIDE SEQUENCE [LARGE SCALE GENOMIC DNA]</scope>
    <source>
        <strain>K12 / W3110 / ATCC 27325 / DSM 5911</strain>
    </source>
</reference>
<reference key="5">
    <citation type="journal article" date="1992" name="Methods Enzymol.">
        <title>Phosphatidylserine synthase from Escherichia coli.</title>
        <authorList>
            <person name="Dowhan W."/>
        </authorList>
    </citation>
    <scope>REVIEW</scope>
</reference>
<reference key="6">
    <citation type="journal article" date="1996" name="Biosci. Biotechnol. Biochem.">
        <title>A regulatory mechanism for the balanced synthesis of membrane phospholipid species in Escherichia coli.</title>
        <authorList>
            <person name="Saha S.K."/>
            <person name="Nishijima S."/>
            <person name="Matsuzaki H."/>
            <person name="Shibuya I."/>
            <person name="Matsumoto K."/>
        </authorList>
    </citation>
    <scope>FUNCTION</scope>
    <scope>CATALYTIC ACTIVITY</scope>
    <scope>DISRUPTION PHENOTYPE</scope>
</reference>
<reference key="7">
    <citation type="journal article" date="2006" name="Proteomics">
        <title>A protein network for phospholipid synthesis uncovered by a variant of the tandem affinity purification method in Escherichia coli.</title>
        <authorList>
            <person name="Gully D."/>
            <person name="Bouveret E."/>
        </authorList>
    </citation>
    <scope>INTERACTION WITH ACP; YBGC AND PLSB</scope>
    <source>
        <strain>K12 / W3110 / ATCC 27325 / DSM 5911</strain>
    </source>
</reference>
<reference evidence="7 8" key="8">
    <citation type="journal article" date="2024" name="Sci. Adv.">
        <title>Structural basis for membrane association and catalysis by phosphatidylserine synthase in Escherichia coli.</title>
        <authorList>
            <person name="Lee E."/>
            <person name="Cho G."/>
            <person name="Kim J."/>
        </authorList>
    </citation>
    <scope>X-RAY CRYSTALLOGRAPHY (2.44 ANGSTROMS) OF 2-451 APO FORM AND MUTANT HIS-357 IN COMPLEX WITH CDP-1,2-DIACYL-SN-GLYCEROL</scope>
    <scope>FUNCTION</scope>
    <scope>CATALYTIC ACTIVITY</scope>
    <scope>BIOPHYSICOCHEMICAL PROPERTIES</scope>
    <scope>SUBUNIT</scope>
    <scope>SUBCELLULAR LOCATION</scope>
    <scope>PATHWAY</scope>
    <scope>DOMAIN</scope>
    <scope>ACTIVE SITE</scope>
    <scope>MUTAGENESIS OF TYR-57; ARG-91; ARG-94; ARG-96; ARG-131; HIS-138; LYS-140; TYR-159; ARG-167; 212-LYS--ARG-219; TYR-273; ASP-305; PHE-306; ILE-316; HIS-357; LYS-359; 433-LYS--ARG-449; 441-ILE--ILE-450 AND LEU-446</scope>
</reference>
<comment type="function">
    <text evidence="3 4">Catalyzes the conversion of cytidine diphosphate diacylglycerol (CDP-DG) and L-serine into phosphatidylserine (PubMed:39693441, PubMed:8824831). Essential for biosynthesis of phosphatidylethanolamine, one of the major membrane phospholipids (PubMed:39693441, PubMed:8824831). Phosphatidylserine is later converted into phosphatidylethanolamine via the action of phosphatidylserine decarboxylase psd (PubMed:39693441, PubMed:8824831). Associates with the bacterial membrane for its role, which depends on the levels of anionic phospholipids in the membrane (PubMed:39693441, PubMed:8824831).</text>
</comment>
<comment type="catalytic activity">
    <reaction evidence="3 4">
        <text>a CDP-1,2-diacyl-sn-glycerol + L-serine = a 1,2-diacyl-sn-glycero-3-phospho-L-serine + CMP + H(+)</text>
        <dbReference type="Rhea" id="RHEA:16913"/>
        <dbReference type="ChEBI" id="CHEBI:15378"/>
        <dbReference type="ChEBI" id="CHEBI:33384"/>
        <dbReference type="ChEBI" id="CHEBI:57262"/>
        <dbReference type="ChEBI" id="CHEBI:58332"/>
        <dbReference type="ChEBI" id="CHEBI:60377"/>
        <dbReference type="EC" id="2.7.8.8"/>
    </reaction>
</comment>
<comment type="biophysicochemical properties">
    <kinetics>
        <KM evidence="3">0.14 mM for CDP-1,2-diacyl-sn-glycerol (at pH 7.5 and 25 degrees Celsius)</KM>
        <KM evidence="3">0.35 mM for L-serine (at pH 7.5 and 25 degrees Celsius)</KM>
        <text evidence="3">kcat is 69.7 sec(-1) for the CDP-1,2-diacyl-sn-glycerol and 59.8 sec(-1) for L-serine (at pH 7.5 and 25 degrees Celsius).</text>
    </kinetics>
</comment>
<comment type="pathway">
    <text evidence="3">Phospholipid metabolism; phosphatidylethanolamine biosynthesis; phosphatidylethanolamine from CDP-diacylglycerol: step 1/2.</text>
</comment>
<comment type="subunit">
    <text evidence="2 3">Multimeric (PubMed:16294310). Interacts with ACP, YbgC and PlsB, forming altogether a complex at the inner membrane (PubMed:16294310). Monomeric and dimeric; existing in equilibrium, but the monomer probably exhibits preferential membrane association (PubMed:39693441).</text>
</comment>
<comment type="subcellular location">
    <subcellularLocation>
        <location>Cytoplasm</location>
    </subcellularLocation>
    <subcellularLocation>
        <location evidence="3">Cell inner membrane</location>
        <topology>Peripheral membrane protein</topology>
        <orientation evidence="3">Cytoplasmic side</orientation>
    </subcellularLocation>
</comment>
<comment type="domain">
    <text evidence="3">The phospholipase domain (PLD) repeats contain two atypical HxKxxxxD (HKD) motifs, which utilize Glu-385 and Asp-169, in place of the Asp-145 and Asp-364 found in the respective motifs, to facilitate the catalytic events that produce phosphatidylserine.</text>
</comment>
<comment type="disruption phenotype">
    <text evidence="4">Shows growth dependency on divalent metal Mg(2+) and significantly reduces the levels of phosphatidylethanolamine.</text>
</comment>
<comment type="similarity">
    <text evidence="6">Belongs to the CDP-alcohol phosphatidyltransferase class-II family.</text>
</comment>
<feature type="chain" id="PRO_0000056824" description="CDP-diacylglycerol--serine O-phosphatidyltransferase PssA">
    <location>
        <begin position="1"/>
        <end position="451"/>
    </location>
</feature>
<feature type="domain" description="PLD phosphodiesterase 1" evidence="3">
    <location>
        <begin position="27"/>
        <end position="224"/>
    </location>
</feature>
<feature type="domain" description="PLD phosphodiesterase 2" evidence="3">
    <location>
        <begin position="239"/>
        <end position="451"/>
    </location>
</feature>
<feature type="active site" evidence="1 3">
    <location>
        <position position="138"/>
    </location>
</feature>
<feature type="active site" evidence="3">
    <location>
        <position position="169"/>
    </location>
</feature>
<feature type="active site" evidence="1 3">
    <location>
        <position position="357"/>
    </location>
</feature>
<feature type="active site" evidence="3">
    <location>
        <position position="385"/>
    </location>
</feature>
<feature type="binding site" evidence="3 8">
    <location>
        <position position="56"/>
    </location>
    <ligand>
        <name>a CDP-1,2-diacyl-sn-glycerol</name>
        <dbReference type="ChEBI" id="CHEBI:58332"/>
    </ligand>
</feature>
<feature type="binding site" evidence="3 8">
    <location>
        <position position="57"/>
    </location>
    <ligand>
        <name>a CDP-1,2-diacyl-sn-glycerol</name>
        <dbReference type="ChEBI" id="CHEBI:58332"/>
    </ligand>
</feature>
<feature type="binding site" evidence="3 8">
    <location>
        <position position="91"/>
    </location>
    <ligand>
        <name>a CDP-1,2-diacyl-sn-glycerol</name>
        <dbReference type="ChEBI" id="CHEBI:58332"/>
    </ligand>
</feature>
<feature type="binding site" evidence="3 8">
    <location>
        <position position="94"/>
    </location>
    <ligand>
        <name>a CDP-1,2-diacyl-sn-glycerol</name>
        <dbReference type="ChEBI" id="CHEBI:58332"/>
    </ligand>
</feature>
<feature type="binding site" evidence="3 8">
    <location>
        <position position="96"/>
    </location>
    <ligand>
        <name>a CDP-1,2-diacyl-sn-glycerol</name>
        <dbReference type="ChEBI" id="CHEBI:58332"/>
    </ligand>
</feature>
<feature type="binding site" evidence="3 8">
    <location>
        <position position="97"/>
    </location>
    <ligand>
        <name>a CDP-1,2-diacyl-sn-glycerol</name>
        <dbReference type="ChEBI" id="CHEBI:58332"/>
    </ligand>
</feature>
<feature type="binding site" evidence="3 8">
    <location>
        <position position="132"/>
    </location>
    <ligand>
        <name>a CDP-1,2-diacyl-sn-glycerol</name>
        <dbReference type="ChEBI" id="CHEBI:58332"/>
    </ligand>
</feature>
<feature type="binding site" evidence="3 8">
    <location>
        <position position="133"/>
    </location>
    <ligand>
        <name>a CDP-1,2-diacyl-sn-glycerol</name>
        <dbReference type="ChEBI" id="CHEBI:58332"/>
    </ligand>
</feature>
<feature type="binding site" evidence="3 8">
    <location>
        <position position="136"/>
    </location>
    <ligand>
        <name>a CDP-1,2-diacyl-sn-glycerol</name>
        <dbReference type="ChEBI" id="CHEBI:58332"/>
    </ligand>
</feature>
<feature type="binding site" evidence="3 8">
    <location>
        <position position="138"/>
    </location>
    <ligand>
        <name>a CDP-1,2-diacyl-sn-glycerol</name>
        <dbReference type="ChEBI" id="CHEBI:58332"/>
    </ligand>
</feature>
<feature type="binding site" evidence="3 8">
    <location>
        <position position="140"/>
    </location>
    <ligand>
        <name>a CDP-1,2-diacyl-sn-glycerol</name>
        <dbReference type="ChEBI" id="CHEBI:58332"/>
    </ligand>
</feature>
<feature type="binding site" evidence="3 8">
    <location>
        <position position="152"/>
    </location>
    <ligand>
        <name>a CDP-1,2-diacyl-sn-glycerol</name>
        <dbReference type="ChEBI" id="CHEBI:58332"/>
    </ligand>
</feature>
<feature type="binding site" evidence="3 8">
    <location>
        <position position="159"/>
    </location>
    <ligand>
        <name>a CDP-1,2-diacyl-sn-glycerol</name>
        <dbReference type="ChEBI" id="CHEBI:58332"/>
    </ligand>
</feature>
<feature type="binding site" evidence="3 8">
    <location>
        <position position="167"/>
    </location>
    <ligand>
        <name>a CDP-1,2-diacyl-sn-glycerol</name>
        <dbReference type="ChEBI" id="CHEBI:58332"/>
    </ligand>
</feature>
<feature type="binding site" evidence="3 8">
    <location>
        <position position="273"/>
    </location>
    <ligand>
        <name>a CDP-1,2-diacyl-sn-glycerol</name>
        <dbReference type="ChEBI" id="CHEBI:58332"/>
    </ligand>
</feature>
<feature type="binding site" evidence="3 8">
    <location>
        <position position="305"/>
    </location>
    <ligand>
        <name>a CDP-1,2-diacyl-sn-glycerol</name>
        <dbReference type="ChEBI" id="CHEBI:58332"/>
    </ligand>
</feature>
<feature type="binding site" evidence="3 8">
    <location>
        <position position="306"/>
    </location>
    <ligand>
        <name>a CDP-1,2-diacyl-sn-glycerol</name>
        <dbReference type="ChEBI" id="CHEBI:58332"/>
    </ligand>
</feature>
<feature type="binding site" evidence="3 8">
    <location>
        <position position="316"/>
    </location>
    <ligand>
        <name>a CDP-1,2-diacyl-sn-glycerol</name>
        <dbReference type="ChEBI" id="CHEBI:58332"/>
    </ligand>
</feature>
<feature type="binding site" evidence="3 8">
    <location>
        <position position="317"/>
    </location>
    <ligand>
        <name>a CDP-1,2-diacyl-sn-glycerol</name>
        <dbReference type="ChEBI" id="CHEBI:58332"/>
    </ligand>
</feature>
<feature type="binding site" evidence="3 8">
    <location>
        <position position="320"/>
    </location>
    <ligand>
        <name>a CDP-1,2-diacyl-sn-glycerol</name>
        <dbReference type="ChEBI" id="CHEBI:58332"/>
    </ligand>
</feature>
<feature type="binding site" evidence="3 8">
    <location>
        <position position="323"/>
    </location>
    <ligand>
        <name>a CDP-1,2-diacyl-sn-glycerol</name>
        <dbReference type="ChEBI" id="CHEBI:58332"/>
    </ligand>
</feature>
<feature type="binding site" evidence="3 8">
    <location>
        <position position="324"/>
    </location>
    <ligand>
        <name>a CDP-1,2-diacyl-sn-glycerol</name>
        <dbReference type="ChEBI" id="CHEBI:58332"/>
    </ligand>
</feature>
<feature type="binding site" evidence="3 8">
    <location>
        <position position="359"/>
    </location>
    <ligand>
        <name>a CDP-1,2-diacyl-sn-glycerol</name>
        <dbReference type="ChEBI" id="CHEBI:58332"/>
    </ligand>
</feature>
<feature type="binding site" evidence="3 8">
    <location>
        <position position="374"/>
    </location>
    <ligand>
        <name>a CDP-1,2-diacyl-sn-glycerol</name>
        <dbReference type="ChEBI" id="CHEBI:58332"/>
    </ligand>
</feature>
<feature type="binding site" evidence="3 8">
    <location>
        <position position="378"/>
    </location>
    <ligand>
        <name>a CDP-1,2-diacyl-sn-glycerol</name>
        <dbReference type="ChEBI" id="CHEBI:58332"/>
    </ligand>
</feature>
<feature type="binding site" evidence="3 8">
    <location>
        <position position="438"/>
    </location>
    <ligand>
        <name>a CDP-1,2-diacyl-sn-glycerol</name>
        <dbReference type="ChEBI" id="CHEBI:58332"/>
    </ligand>
</feature>
<feature type="binding site" evidence="3 8">
    <location>
        <position position="447"/>
    </location>
    <ligand>
        <name>a CDP-1,2-diacyl-sn-glycerol</name>
        <dbReference type="ChEBI" id="CHEBI:58332"/>
    </ligand>
</feature>
<feature type="binding site" evidence="3 8">
    <location>
        <position position="450"/>
    </location>
    <ligand>
        <name>a CDP-1,2-diacyl-sn-glycerol</name>
        <dbReference type="ChEBI" id="CHEBI:58332"/>
    </ligand>
</feature>
<feature type="binding site" evidence="3 8">
    <location>
        <position position="451"/>
    </location>
    <ligand>
        <name>a CDP-1,2-diacyl-sn-glycerol</name>
        <dbReference type="ChEBI" id="CHEBI:58332"/>
    </ligand>
</feature>
<feature type="mutagenesis site" description="Does not affect enzyme activity when serine concentration is saturating but reduces significantly when limiting." evidence="3">
    <original>Y</original>
    <variation>A</variation>
    <location>
        <position position="57"/>
    </location>
</feature>
<feature type="mutagenesis site" description="Reduces the enzyme activity." evidence="3">
    <original>R</original>
    <variation>A</variation>
    <location>
        <position position="91"/>
    </location>
</feature>
<feature type="mutagenesis site" description="Reduces the enzyme activity." evidence="3">
    <original>R</original>
    <variation>A</variation>
    <location>
        <position position="94"/>
    </location>
</feature>
<feature type="mutagenesis site" description="Does not affect enzyme activity." evidence="3">
    <original>R</original>
    <variation>A</variation>
    <location>
        <position position="96"/>
    </location>
</feature>
<feature type="mutagenesis site" description="Does not affect enzyme membrane association; when associated with 212-E--E-219." evidence="3">
    <original>R</original>
    <variation>E</variation>
    <location>
        <position position="131"/>
    </location>
</feature>
<feature type="mutagenesis site" description="Reduces the enzyme activity." evidence="3">
    <original>H</original>
    <variation>A</variation>
    <location>
        <position position="138"/>
    </location>
</feature>
<feature type="mutagenesis site" description="Abolishes the enzyme activity." evidence="3">
    <original>K</original>
    <variation>A</variation>
    <location>
        <position position="140"/>
    </location>
</feature>
<feature type="mutagenesis site" description="Reduces the enzyme activity when serine concentration is saturating but becomes comparable to the wild type when limiting." evidence="3">
    <original>Y</original>
    <variation>A</variation>
    <location>
        <position position="159"/>
    </location>
</feature>
<feature type="mutagenesis site" description="Reduces the enzyme activity." evidence="3">
    <original>R</original>
    <variation>A</variation>
    <location>
        <position position="167"/>
    </location>
</feature>
<feature type="mutagenesis site" description="Does not affect enzyme membrane association; when associated with E-131." evidence="3">
    <original>KNDIRLFR</original>
    <variation>ENDIRLFE</variation>
    <location>
        <begin position="212"/>
        <end position="219"/>
    </location>
</feature>
<feature type="mutagenesis site" description="Reduces the enzyme activity." evidence="3">
    <original>Y</original>
    <variation>A</variation>
    <location>
        <position position="273"/>
    </location>
</feature>
<feature type="mutagenesis site" description="Reduces the enzyme activity." evidence="3">
    <original>D</original>
    <variation>A</variation>
    <location>
        <position position="305"/>
    </location>
</feature>
<feature type="mutagenesis site" description="Reduces the enzyme activity." evidence="3">
    <original>F</original>
    <variation>A</variation>
    <location>
        <position position="306"/>
    </location>
</feature>
<feature type="mutagenesis site" description="Stabilizes the monomeric form of the enzyme; when associated with 441-D--D-450." evidence="3">
    <original>I</original>
    <variation>D</variation>
    <location>
        <position position="316"/>
    </location>
</feature>
<feature type="mutagenesis site" description="Abolishes the enzyme activity." evidence="3">
    <original>H</original>
    <variation>A</variation>
    <location>
        <position position="357"/>
    </location>
</feature>
<feature type="mutagenesis site" description="Abolishes the enzyme activity." evidence="3">
    <original>K</original>
    <variation>A</variation>
    <location>
        <position position="359"/>
    </location>
</feature>
<feature type="mutagenesis site" description="Reduces enzyme membrane association." evidence="3">
    <original>KLIRRLRRIRIDRLISR</original>
    <variation>ELIEELEEIEIDELISE</variation>
    <location>
        <begin position="433"/>
        <end position="449"/>
    </location>
</feature>
<feature type="mutagenesis site" description="Stabilizes the monomeric form of the enzyme; when associated with D-316." evidence="3">
    <original>IRIDRLISRI</original>
    <variation>DRDDRDISRD</variation>
    <location>
        <begin position="441"/>
        <end position="450"/>
    </location>
</feature>
<feature type="mutagenesis site" description="Increases enzyme dimer formation through disulfide linkage." evidence="3">
    <original>L</original>
    <variation>C</variation>
    <location>
        <position position="446"/>
    </location>
</feature>
<feature type="sequence conflict" description="In Ref. 1; AAA97504." evidence="6" ref="1">
    <original>A</original>
    <variation>R</variation>
    <location>
        <position position="32"/>
    </location>
</feature>
<feature type="sequence conflict" description="In Ref. 1; AAA97504." evidence="6" ref="1">
    <original>R</original>
    <variation>DD</variation>
    <location>
        <position position="78"/>
    </location>
</feature>
<feature type="sequence conflict" description="In Ref. 1; AAA97504." evidence="6" ref="1">
    <original>KYR</original>
    <variation>NIA</variation>
    <location>
        <begin position="165"/>
        <end position="167"/>
    </location>
</feature>
<feature type="sequence conflict" description="In Ref. 1; AAA97504." evidence="6" ref="1">
    <original>LL</original>
    <variation>FV</variation>
    <location>
        <begin position="287"/>
        <end position="288"/>
    </location>
</feature>
<feature type="sequence conflict" description="In Ref. 1; AAA97504." evidence="6" ref="1">
    <original>P</original>
    <variation>S</variation>
    <location>
        <position position="309"/>
    </location>
</feature>
<feature type="helix" evidence="9">
    <location>
        <begin position="9"/>
        <end position="15"/>
    </location>
</feature>
<feature type="helix" evidence="9">
    <location>
        <begin position="24"/>
        <end position="26"/>
    </location>
</feature>
<feature type="strand" evidence="9">
    <location>
        <begin position="27"/>
        <end position="30"/>
    </location>
</feature>
<feature type="helix" evidence="9">
    <location>
        <begin position="33"/>
        <end position="46"/>
    </location>
</feature>
<feature type="strand" evidence="9">
    <location>
        <begin position="48"/>
        <end position="54"/>
    </location>
</feature>
<feature type="helix" evidence="9">
    <location>
        <begin position="62"/>
        <end position="77"/>
    </location>
</feature>
<feature type="strand" evidence="9">
    <location>
        <begin position="81"/>
        <end position="88"/>
    </location>
</feature>
<feature type="helix" evidence="9">
    <location>
        <begin position="91"/>
        <end position="93"/>
    </location>
</feature>
<feature type="helix" evidence="9">
    <location>
        <begin position="105"/>
        <end position="114"/>
    </location>
</feature>
<feature type="strand" evidence="9">
    <location>
        <begin position="123"/>
        <end position="126"/>
    </location>
</feature>
<feature type="strand" evidence="9">
    <location>
        <begin position="128"/>
        <end position="131"/>
    </location>
</feature>
<feature type="helix" evidence="9">
    <location>
        <begin position="132"/>
        <end position="134"/>
    </location>
</feature>
<feature type="strand" evidence="9">
    <location>
        <begin position="141"/>
        <end position="144"/>
    </location>
</feature>
<feature type="strand" evidence="9">
    <location>
        <begin position="147"/>
        <end position="152"/>
    </location>
</feature>
<feature type="turn" evidence="9">
    <location>
        <begin position="157"/>
        <end position="161"/>
    </location>
</feature>
<feature type="helix" evidence="9">
    <location>
        <begin position="162"/>
        <end position="164"/>
    </location>
</feature>
<feature type="strand" evidence="9">
    <location>
        <begin position="171"/>
        <end position="175"/>
    </location>
</feature>
<feature type="helix" evidence="9">
    <location>
        <begin position="177"/>
        <end position="190"/>
    </location>
</feature>
<feature type="turn" evidence="9">
    <location>
        <begin position="191"/>
        <end position="193"/>
    </location>
</feature>
<feature type="strand" evidence="9">
    <location>
        <begin position="198"/>
        <end position="201"/>
    </location>
</feature>
<feature type="helix" evidence="9">
    <location>
        <begin position="208"/>
        <end position="211"/>
    </location>
</feature>
<feature type="helix" evidence="9">
    <location>
        <begin position="212"/>
        <end position="222"/>
    </location>
</feature>
<feature type="strand" evidence="9">
    <location>
        <begin position="239"/>
        <end position="247"/>
    </location>
</feature>
<feature type="helix" evidence="9">
    <location>
        <begin position="251"/>
        <end position="259"/>
    </location>
</feature>
<feature type="helix" evidence="9">
    <location>
        <begin position="260"/>
        <end position="262"/>
    </location>
</feature>
<feature type="strand" evidence="9">
    <location>
        <begin position="264"/>
        <end position="270"/>
    </location>
</feature>
<feature type="helix" evidence="9">
    <location>
        <begin position="278"/>
        <end position="289"/>
    </location>
</feature>
<feature type="strand" evidence="9">
    <location>
        <begin position="293"/>
        <end position="299"/>
    </location>
</feature>
<feature type="helix" evidence="9">
    <location>
        <begin position="301"/>
        <end position="303"/>
    </location>
</feature>
<feature type="helix" evidence="9">
    <location>
        <begin position="316"/>
        <end position="319"/>
    </location>
</feature>
<feature type="helix" evidence="9">
    <location>
        <begin position="320"/>
        <end position="334"/>
    </location>
</feature>
<feature type="helix" evidence="9">
    <location>
        <begin position="336"/>
        <end position="340"/>
    </location>
</feature>
<feature type="strand" evidence="9">
    <location>
        <begin position="343"/>
        <end position="349"/>
    </location>
</feature>
<feature type="strand" evidence="9">
    <location>
        <begin position="360"/>
        <end position="363"/>
    </location>
</feature>
<feature type="turn" evidence="9">
    <location>
        <begin position="364"/>
        <end position="366"/>
    </location>
</feature>
<feature type="strand" evidence="9">
    <location>
        <begin position="367"/>
        <end position="372"/>
    </location>
</feature>
<feature type="helix" evidence="9">
    <location>
        <begin position="377"/>
        <end position="381"/>
    </location>
</feature>
<feature type="strand" evidence="9">
    <location>
        <begin position="383"/>
        <end position="391"/>
    </location>
</feature>
<feature type="helix" evidence="9">
    <location>
        <begin position="398"/>
        <end position="410"/>
    </location>
</feature>
<feature type="strand" evidence="9">
    <location>
        <begin position="412"/>
        <end position="415"/>
    </location>
</feature>
<feature type="helix" evidence="9">
    <location>
        <begin position="418"/>
        <end position="420"/>
    </location>
</feature>
<feature type="helix" evidence="9">
    <location>
        <begin position="424"/>
        <end position="426"/>
    </location>
</feature>
<feature type="helix" evidence="9">
    <location>
        <begin position="429"/>
        <end position="440"/>
    </location>
</feature>
<feature type="helix" evidence="9">
    <location>
        <begin position="443"/>
        <end position="450"/>
    </location>
</feature>